<dbReference type="EMBL" id="AK172877">
    <property type="protein sequence ID" value="BAD32155.1"/>
    <property type="status" value="ALT_INIT"/>
    <property type="molecule type" value="Transcribed_RNA"/>
</dbReference>
<dbReference type="EMBL" id="AK019649">
    <property type="protein sequence ID" value="BAB31823.1"/>
    <property type="molecule type" value="mRNA"/>
</dbReference>
<dbReference type="EMBL" id="BC021759">
    <property type="protein sequence ID" value="AAH21759.1"/>
    <property type="status" value="ALT_INIT"/>
    <property type="molecule type" value="mRNA"/>
</dbReference>
<dbReference type="EMBL" id="BC086457">
    <property type="protein sequence ID" value="AAH86457.1"/>
    <property type="status" value="ALT_INIT"/>
    <property type="molecule type" value="mRNA"/>
</dbReference>
<dbReference type="RefSeq" id="NP_001074433.1">
    <molecule id="Q9D2H6-1"/>
    <property type="nucleotide sequence ID" value="NM_001080964.2"/>
</dbReference>
<dbReference type="RefSeq" id="NP_084496.2">
    <property type="nucleotide sequence ID" value="NM_030220.3"/>
</dbReference>
<dbReference type="SMR" id="Q9D2H6"/>
<dbReference type="BioGRID" id="219700">
    <property type="interactions" value="5"/>
</dbReference>
<dbReference type="FunCoup" id="Q9D2H6">
    <property type="interactions" value="2585"/>
</dbReference>
<dbReference type="IntAct" id="Q9D2H6">
    <property type="interactions" value="2"/>
</dbReference>
<dbReference type="STRING" id="10090.ENSMUSP00000103250"/>
<dbReference type="GlyGen" id="Q9D2H6">
    <property type="glycosylation" value="7 sites, 1 O-linked glycan (6 sites)"/>
</dbReference>
<dbReference type="iPTMnet" id="Q9D2H6"/>
<dbReference type="PhosphoSitePlus" id="Q9D2H6"/>
<dbReference type="jPOST" id="Q9D2H6"/>
<dbReference type="PaxDb" id="10090-ENSMUSP00000103252"/>
<dbReference type="ProteomicsDB" id="257547">
    <molecule id="Q9D2H6-1"/>
</dbReference>
<dbReference type="ProteomicsDB" id="257548">
    <molecule id="Q9D2H6-2"/>
</dbReference>
<dbReference type="Pumba" id="Q9D2H6"/>
<dbReference type="DNASU" id="78912"/>
<dbReference type="Ensembl" id="ENSMUST00000381755.1">
    <molecule id="Q9D2H6-1"/>
    <property type="protein sequence ID" value="ENSMUSP00000160142.1"/>
    <property type="gene ID" value="ENSMUSG00000018678.15"/>
</dbReference>
<dbReference type="GeneID" id="78912"/>
<dbReference type="KEGG" id="mmu:78912"/>
<dbReference type="UCSC" id="uc007ldg.1">
    <molecule id="Q9D2H6-1"/>
    <property type="organism name" value="mouse"/>
</dbReference>
<dbReference type="AGR" id="MGI:1926162"/>
<dbReference type="CTD" id="6668"/>
<dbReference type="MGI" id="MGI:1926162">
    <property type="gene designation" value="Sp2"/>
</dbReference>
<dbReference type="eggNOG" id="KOG1721">
    <property type="taxonomic scope" value="Eukaryota"/>
</dbReference>
<dbReference type="GeneTree" id="ENSGT00940000159590"/>
<dbReference type="InParanoid" id="Q9D2H6"/>
<dbReference type="OrthoDB" id="6365676at2759"/>
<dbReference type="BioGRID-ORCS" id="78912">
    <property type="hits" value="5 hits in 76 CRISPR screens"/>
</dbReference>
<dbReference type="ChiTaRS" id="Sp2">
    <property type="organism name" value="mouse"/>
</dbReference>
<dbReference type="PRO" id="PR:Q9D2H6"/>
<dbReference type="Proteomes" id="UP000000589">
    <property type="component" value="Unplaced"/>
</dbReference>
<dbReference type="RNAct" id="Q9D2H6">
    <property type="molecule type" value="protein"/>
</dbReference>
<dbReference type="GO" id="GO:0005634">
    <property type="term" value="C:nucleus"/>
    <property type="evidence" value="ECO:0007669"/>
    <property type="project" value="UniProtKB-SubCell"/>
</dbReference>
<dbReference type="GO" id="GO:0003677">
    <property type="term" value="F:DNA binding"/>
    <property type="evidence" value="ECO:0000250"/>
    <property type="project" value="MGI"/>
</dbReference>
<dbReference type="GO" id="GO:0008270">
    <property type="term" value="F:zinc ion binding"/>
    <property type="evidence" value="ECO:0007669"/>
    <property type="project" value="UniProtKB-KW"/>
</dbReference>
<dbReference type="GO" id="GO:0072359">
    <property type="term" value="P:circulatory system development"/>
    <property type="evidence" value="ECO:0000315"/>
    <property type="project" value="MGI"/>
</dbReference>
<dbReference type="GO" id="GO:0048568">
    <property type="term" value="P:embryonic organ development"/>
    <property type="evidence" value="ECO:0000315"/>
    <property type="project" value="MGI"/>
</dbReference>
<dbReference type="GO" id="GO:0048144">
    <property type="term" value="P:fibroblast proliferation"/>
    <property type="evidence" value="ECO:0000315"/>
    <property type="project" value="MGI"/>
</dbReference>
<dbReference type="GO" id="GO:0001701">
    <property type="term" value="P:in utero embryonic development"/>
    <property type="evidence" value="ECO:0000315"/>
    <property type="project" value="MGI"/>
</dbReference>
<dbReference type="GO" id="GO:0035264">
    <property type="term" value="P:multicellular organism growth"/>
    <property type="evidence" value="ECO:0000315"/>
    <property type="project" value="MGI"/>
</dbReference>
<dbReference type="CDD" id="cd22540">
    <property type="entry name" value="SP2_N"/>
    <property type="match status" value="1"/>
</dbReference>
<dbReference type="FunFam" id="3.30.160.60:FF:000421">
    <property type="entry name" value="Sp2 transcription factor"/>
    <property type="match status" value="1"/>
</dbReference>
<dbReference type="FunFam" id="3.30.160.60:FF:000455">
    <property type="entry name" value="Transcription factor Sp2"/>
    <property type="match status" value="1"/>
</dbReference>
<dbReference type="FunFam" id="3.30.160.60:FF:000014">
    <property type="entry name" value="Transcription factor Sp3"/>
    <property type="match status" value="1"/>
</dbReference>
<dbReference type="Gene3D" id="3.30.160.60">
    <property type="entry name" value="Classic Zinc Finger"/>
    <property type="match status" value="3"/>
</dbReference>
<dbReference type="InterPro" id="IPR036236">
    <property type="entry name" value="Znf_C2H2_sf"/>
</dbReference>
<dbReference type="InterPro" id="IPR013087">
    <property type="entry name" value="Znf_C2H2_type"/>
</dbReference>
<dbReference type="PANTHER" id="PTHR23235">
    <property type="entry name" value="KRUEPPEL-LIKE TRANSCRIPTION FACTOR"/>
    <property type="match status" value="1"/>
</dbReference>
<dbReference type="PANTHER" id="PTHR23235:SF1">
    <property type="entry name" value="TRANSCRIPTION FACTOR SP2"/>
    <property type="match status" value="1"/>
</dbReference>
<dbReference type="Pfam" id="PF00096">
    <property type="entry name" value="zf-C2H2"/>
    <property type="match status" value="3"/>
</dbReference>
<dbReference type="SMART" id="SM00355">
    <property type="entry name" value="ZnF_C2H2"/>
    <property type="match status" value="3"/>
</dbReference>
<dbReference type="SUPFAM" id="SSF57667">
    <property type="entry name" value="beta-beta-alpha zinc fingers"/>
    <property type="match status" value="3"/>
</dbReference>
<dbReference type="PROSITE" id="PS00028">
    <property type="entry name" value="ZINC_FINGER_C2H2_1"/>
    <property type="match status" value="3"/>
</dbReference>
<dbReference type="PROSITE" id="PS50157">
    <property type="entry name" value="ZINC_FINGER_C2H2_2"/>
    <property type="match status" value="3"/>
</dbReference>
<organism>
    <name type="scientific">Mus musculus</name>
    <name type="common">Mouse</name>
    <dbReference type="NCBI Taxonomy" id="10090"/>
    <lineage>
        <taxon>Eukaryota</taxon>
        <taxon>Metazoa</taxon>
        <taxon>Chordata</taxon>
        <taxon>Craniata</taxon>
        <taxon>Vertebrata</taxon>
        <taxon>Euteleostomi</taxon>
        <taxon>Mammalia</taxon>
        <taxon>Eutheria</taxon>
        <taxon>Euarchontoglires</taxon>
        <taxon>Glires</taxon>
        <taxon>Rodentia</taxon>
        <taxon>Myomorpha</taxon>
        <taxon>Muroidea</taxon>
        <taxon>Muridae</taxon>
        <taxon>Murinae</taxon>
        <taxon>Mus</taxon>
        <taxon>Mus</taxon>
    </lineage>
</organism>
<gene>
    <name type="primary">Sp2</name>
    <name type="synonym">Kiaa0048</name>
</gene>
<comment type="function">
    <text evidence="1">Binds to GC box promoters elements and selectively activates mRNA synthesis from genes that contain functional recognition sites.</text>
</comment>
<comment type="subcellular location">
    <subcellularLocation>
        <location evidence="1">Nucleus</location>
    </subcellularLocation>
</comment>
<comment type="alternative products">
    <event type="alternative splicing"/>
    <isoform>
        <id>Q9D2H6-1</id>
        <name>1</name>
        <sequence type="displayed"/>
    </isoform>
    <isoform>
        <id>Q9D2H6-2</id>
        <name>2</name>
        <sequence type="described" ref="VSP_022022"/>
    </isoform>
</comment>
<comment type="domain">
    <text evidence="2">The 9aaTAD motif is a transactivation domain present in a large number of yeast and animal transcription factors. In SP2, the motif is inactive.</text>
</comment>
<comment type="similarity">
    <text evidence="6">Belongs to the Sp1 C2H2-type zinc-finger protein family.</text>
</comment>
<comment type="sequence caution" evidence="6">
    <conflict type="erroneous initiation">
        <sequence resource="EMBL-CDS" id="AAH21759"/>
    </conflict>
</comment>
<comment type="sequence caution" evidence="6">
    <conflict type="erroneous initiation">
        <sequence resource="EMBL-CDS" id="AAH86457"/>
    </conflict>
</comment>
<comment type="sequence caution" evidence="6">
    <conflict type="erroneous initiation">
        <sequence resource="EMBL-CDS" id="BAD32155"/>
    </conflict>
</comment>
<feature type="chain" id="PRO_0000269192" description="Transcription factor Sp2">
    <location>
        <begin position="1"/>
        <end position="612"/>
    </location>
</feature>
<feature type="zinc finger region" description="C2H2-type 1" evidence="3">
    <location>
        <begin position="524"/>
        <end position="548"/>
    </location>
</feature>
<feature type="zinc finger region" description="C2H2-type 2" evidence="3">
    <location>
        <begin position="554"/>
        <end position="578"/>
    </location>
</feature>
<feature type="zinc finger region" description="C2H2-type 3" evidence="3">
    <location>
        <begin position="584"/>
        <end position="606"/>
    </location>
</feature>
<feature type="region of interest" description="Disordered" evidence="4">
    <location>
        <begin position="166"/>
        <end position="195"/>
    </location>
</feature>
<feature type="region of interest" description="Disordered" evidence="4">
    <location>
        <begin position="226"/>
        <end position="250"/>
    </location>
</feature>
<feature type="short sequence motif" description="9aaTAD; inactive" evidence="2">
    <location>
        <begin position="360"/>
        <end position="368"/>
    </location>
</feature>
<feature type="compositionally biased region" description="Polar residues" evidence="4">
    <location>
        <begin position="184"/>
        <end position="195"/>
    </location>
</feature>
<feature type="modified residue" description="Phosphoserine" evidence="2">
    <location>
        <position position="78"/>
    </location>
</feature>
<feature type="splice variant" id="VSP_022022" description="In isoform 2." evidence="5">
    <location>
        <begin position="1"/>
        <end position="7"/>
    </location>
</feature>
<feature type="sequence conflict" description="In Ref. 3; AAH86457." evidence="6" ref="3">
    <original>M</original>
    <variation>T</variation>
    <location>
        <position position="6"/>
    </location>
</feature>
<feature type="sequence conflict" description="In Ref. 1; BAD32155." evidence="6" ref="1">
    <location>
        <position position="97"/>
    </location>
</feature>
<evidence type="ECO:0000250" key="1"/>
<evidence type="ECO:0000250" key="2">
    <source>
        <dbReference type="UniProtKB" id="Q02086"/>
    </source>
</evidence>
<evidence type="ECO:0000255" key="3">
    <source>
        <dbReference type="PROSITE-ProRule" id="PRU00042"/>
    </source>
</evidence>
<evidence type="ECO:0000256" key="4">
    <source>
        <dbReference type="SAM" id="MobiDB-lite"/>
    </source>
</evidence>
<evidence type="ECO:0000303" key="5">
    <source>
    </source>
</evidence>
<evidence type="ECO:0000305" key="6"/>
<protein>
    <recommendedName>
        <fullName>Transcription factor Sp2</fullName>
    </recommendedName>
</protein>
<sequence>MSDPQMSMAATAAVSPSDYLQPAAATTQDSQPSPLALLAATCSKIGPPAVEAAVTPPAPPQPTPRKLVPIKPAPLPLSPCKNSFSILSSKGNILQIQGSQLSTSYPGGQFVFAIQNPTLINKGSRSNASIQYQVPQIQGNSSQTIQVQPSLTNQIQVIPGTNQAITTPSTSGHKPVPIKPAPVQKSSTTTTPVQSGANVVKLTGGGSNMTLTLPLNNLVNTSDIGGPAQLLTESPPTPLSKTNKKARKKSLPVSQPSVAVAEQVETVLIETTADNIIQAGNNLLIVQSPGGGQPAVVQQVQVVPPKAEQQQVVQIPQQALRVVQAASATLPTVPQKPSQNFQIQTTEPTPTQVYIRTPSGEVQTVLVQDSPPATAATTSTVTCNSPALRAPHLSGTSKKHSAAILRKERPLPKIAPAGSIISLNAAQLAAAAQAMQTININGVQVQGVPVTITNTGGQQQLTVQNVSGNNLTISGLSPTQIQLQMEQALAGEAQPGEKRRRMACTCPNCKDGEKRSGEQGKKKHVCHIPDCGKTFRKTSLLRAHVRLHTGERPFVCNWFFCGKRFTRSDELQRHARTHTGDKRFECAQCQKRFMRSDHLTKHYKTHLGTKGL</sequence>
<keyword id="KW-0010">Activator</keyword>
<keyword id="KW-0025">Alternative splicing</keyword>
<keyword id="KW-0238">DNA-binding</keyword>
<keyword id="KW-0479">Metal-binding</keyword>
<keyword id="KW-0539">Nucleus</keyword>
<keyword id="KW-0597">Phosphoprotein</keyword>
<keyword id="KW-1185">Reference proteome</keyword>
<keyword id="KW-0677">Repeat</keyword>
<keyword id="KW-0804">Transcription</keyword>
<keyword id="KW-0805">Transcription regulation</keyword>
<keyword id="KW-0862">Zinc</keyword>
<keyword id="KW-0863">Zinc-finger</keyword>
<proteinExistence type="evidence at transcript level"/>
<accession>Q9D2H6</accession>
<accession>Q6A0E1</accession>
<name>SP2_MOUSE</name>
<reference key="1">
    <citation type="journal article" date="2004" name="DNA Res.">
        <title>Prediction of the coding sequences of mouse homologues of KIAA gene: IV. The complete nucleotide sequences of 500 mouse KIAA-homologous cDNAs identified by screening of terminal sequences of cDNA clones randomly sampled from size-fractionated libraries.</title>
        <authorList>
            <person name="Okazaki N."/>
            <person name="Kikuno R."/>
            <person name="Ohara R."/>
            <person name="Inamoto S."/>
            <person name="Koseki H."/>
            <person name="Hiraoka S."/>
            <person name="Saga Y."/>
            <person name="Seino S."/>
            <person name="Nishimura M."/>
            <person name="Kaisho T."/>
            <person name="Hoshino K."/>
            <person name="Kitamura H."/>
            <person name="Nagase T."/>
            <person name="Ohara O."/>
            <person name="Koga H."/>
        </authorList>
    </citation>
    <scope>NUCLEOTIDE SEQUENCE [LARGE SCALE MRNA] (ISOFORM 1)</scope>
    <source>
        <tissue>Pancreatic islet</tissue>
    </source>
</reference>
<reference key="2">
    <citation type="journal article" date="2005" name="Science">
        <title>The transcriptional landscape of the mammalian genome.</title>
        <authorList>
            <person name="Carninci P."/>
            <person name="Kasukawa T."/>
            <person name="Katayama S."/>
            <person name="Gough J."/>
            <person name="Frith M.C."/>
            <person name="Maeda N."/>
            <person name="Oyama R."/>
            <person name="Ravasi T."/>
            <person name="Lenhard B."/>
            <person name="Wells C."/>
            <person name="Kodzius R."/>
            <person name="Shimokawa K."/>
            <person name="Bajic V.B."/>
            <person name="Brenner S.E."/>
            <person name="Batalov S."/>
            <person name="Forrest A.R."/>
            <person name="Zavolan M."/>
            <person name="Davis M.J."/>
            <person name="Wilming L.G."/>
            <person name="Aidinis V."/>
            <person name="Allen J.E."/>
            <person name="Ambesi-Impiombato A."/>
            <person name="Apweiler R."/>
            <person name="Aturaliya R.N."/>
            <person name="Bailey T.L."/>
            <person name="Bansal M."/>
            <person name="Baxter L."/>
            <person name="Beisel K.W."/>
            <person name="Bersano T."/>
            <person name="Bono H."/>
            <person name="Chalk A.M."/>
            <person name="Chiu K.P."/>
            <person name="Choudhary V."/>
            <person name="Christoffels A."/>
            <person name="Clutterbuck D.R."/>
            <person name="Crowe M.L."/>
            <person name="Dalla E."/>
            <person name="Dalrymple B.P."/>
            <person name="de Bono B."/>
            <person name="Della Gatta G."/>
            <person name="di Bernardo D."/>
            <person name="Down T."/>
            <person name="Engstrom P."/>
            <person name="Fagiolini M."/>
            <person name="Faulkner G."/>
            <person name="Fletcher C.F."/>
            <person name="Fukushima T."/>
            <person name="Furuno M."/>
            <person name="Futaki S."/>
            <person name="Gariboldi M."/>
            <person name="Georgii-Hemming P."/>
            <person name="Gingeras T.R."/>
            <person name="Gojobori T."/>
            <person name="Green R.E."/>
            <person name="Gustincich S."/>
            <person name="Harbers M."/>
            <person name="Hayashi Y."/>
            <person name="Hensch T.K."/>
            <person name="Hirokawa N."/>
            <person name="Hill D."/>
            <person name="Huminiecki L."/>
            <person name="Iacono M."/>
            <person name="Ikeo K."/>
            <person name="Iwama A."/>
            <person name="Ishikawa T."/>
            <person name="Jakt M."/>
            <person name="Kanapin A."/>
            <person name="Katoh M."/>
            <person name="Kawasawa Y."/>
            <person name="Kelso J."/>
            <person name="Kitamura H."/>
            <person name="Kitano H."/>
            <person name="Kollias G."/>
            <person name="Krishnan S.P."/>
            <person name="Kruger A."/>
            <person name="Kummerfeld S.K."/>
            <person name="Kurochkin I.V."/>
            <person name="Lareau L.F."/>
            <person name="Lazarevic D."/>
            <person name="Lipovich L."/>
            <person name="Liu J."/>
            <person name="Liuni S."/>
            <person name="McWilliam S."/>
            <person name="Madan Babu M."/>
            <person name="Madera M."/>
            <person name="Marchionni L."/>
            <person name="Matsuda H."/>
            <person name="Matsuzawa S."/>
            <person name="Miki H."/>
            <person name="Mignone F."/>
            <person name="Miyake S."/>
            <person name="Morris K."/>
            <person name="Mottagui-Tabar S."/>
            <person name="Mulder N."/>
            <person name="Nakano N."/>
            <person name="Nakauchi H."/>
            <person name="Ng P."/>
            <person name="Nilsson R."/>
            <person name="Nishiguchi S."/>
            <person name="Nishikawa S."/>
            <person name="Nori F."/>
            <person name="Ohara O."/>
            <person name="Okazaki Y."/>
            <person name="Orlando V."/>
            <person name="Pang K.C."/>
            <person name="Pavan W.J."/>
            <person name="Pavesi G."/>
            <person name="Pesole G."/>
            <person name="Petrovsky N."/>
            <person name="Piazza S."/>
            <person name="Reed J."/>
            <person name="Reid J.F."/>
            <person name="Ring B.Z."/>
            <person name="Ringwald M."/>
            <person name="Rost B."/>
            <person name="Ruan Y."/>
            <person name="Salzberg S.L."/>
            <person name="Sandelin A."/>
            <person name="Schneider C."/>
            <person name="Schoenbach C."/>
            <person name="Sekiguchi K."/>
            <person name="Semple C.A."/>
            <person name="Seno S."/>
            <person name="Sessa L."/>
            <person name="Sheng Y."/>
            <person name="Shibata Y."/>
            <person name="Shimada H."/>
            <person name="Shimada K."/>
            <person name="Silva D."/>
            <person name="Sinclair B."/>
            <person name="Sperling S."/>
            <person name="Stupka E."/>
            <person name="Sugiura K."/>
            <person name="Sultana R."/>
            <person name="Takenaka Y."/>
            <person name="Taki K."/>
            <person name="Tammoja K."/>
            <person name="Tan S.L."/>
            <person name="Tang S."/>
            <person name="Taylor M.S."/>
            <person name="Tegner J."/>
            <person name="Teichmann S.A."/>
            <person name="Ueda H.R."/>
            <person name="van Nimwegen E."/>
            <person name="Verardo R."/>
            <person name="Wei C.L."/>
            <person name="Yagi K."/>
            <person name="Yamanishi H."/>
            <person name="Zabarovsky E."/>
            <person name="Zhu S."/>
            <person name="Zimmer A."/>
            <person name="Hide W."/>
            <person name="Bult C."/>
            <person name="Grimmond S.M."/>
            <person name="Teasdale R.D."/>
            <person name="Liu E.T."/>
            <person name="Brusic V."/>
            <person name="Quackenbush J."/>
            <person name="Wahlestedt C."/>
            <person name="Mattick J.S."/>
            <person name="Hume D.A."/>
            <person name="Kai C."/>
            <person name="Sasaki D."/>
            <person name="Tomaru Y."/>
            <person name="Fukuda S."/>
            <person name="Kanamori-Katayama M."/>
            <person name="Suzuki M."/>
            <person name="Aoki J."/>
            <person name="Arakawa T."/>
            <person name="Iida J."/>
            <person name="Imamura K."/>
            <person name="Itoh M."/>
            <person name="Kato T."/>
            <person name="Kawaji H."/>
            <person name="Kawagashira N."/>
            <person name="Kawashima T."/>
            <person name="Kojima M."/>
            <person name="Kondo S."/>
            <person name="Konno H."/>
            <person name="Nakano K."/>
            <person name="Ninomiya N."/>
            <person name="Nishio T."/>
            <person name="Okada M."/>
            <person name="Plessy C."/>
            <person name="Shibata K."/>
            <person name="Shiraki T."/>
            <person name="Suzuki S."/>
            <person name="Tagami M."/>
            <person name="Waki K."/>
            <person name="Watahiki A."/>
            <person name="Okamura-Oho Y."/>
            <person name="Suzuki H."/>
            <person name="Kawai J."/>
            <person name="Hayashizaki Y."/>
        </authorList>
    </citation>
    <scope>NUCLEOTIDE SEQUENCE [LARGE SCALE MRNA] (ISOFORM 2)</scope>
    <source>
        <strain>C57BL/6J</strain>
        <tissue>Testis</tissue>
    </source>
</reference>
<reference key="3">
    <citation type="journal article" date="2004" name="Genome Res.">
        <title>The status, quality, and expansion of the NIH full-length cDNA project: the Mammalian Gene Collection (MGC).</title>
        <authorList>
            <consortium name="The MGC Project Team"/>
        </authorList>
    </citation>
    <scope>NUCLEOTIDE SEQUENCE [LARGE SCALE MRNA] (ISOFORM 1)</scope>
    <source>
        <strain>FVB/N</strain>
        <tissue>Eye</tissue>
        <tissue>Mammary tumor</tissue>
    </source>
</reference>